<name>KDSA_PSEPW</name>
<accession>B1J5Q5</accession>
<keyword id="KW-0963">Cytoplasm</keyword>
<keyword id="KW-0448">Lipopolysaccharide biosynthesis</keyword>
<keyword id="KW-0808">Transferase</keyword>
<evidence type="ECO:0000255" key="1">
    <source>
        <dbReference type="HAMAP-Rule" id="MF_00056"/>
    </source>
</evidence>
<feature type="chain" id="PRO_1000091826" description="2-dehydro-3-deoxyphosphooctonate aldolase">
    <location>
        <begin position="1"/>
        <end position="280"/>
    </location>
</feature>
<protein>
    <recommendedName>
        <fullName evidence="1">2-dehydro-3-deoxyphosphooctonate aldolase</fullName>
        <ecNumber evidence="1">2.5.1.55</ecNumber>
    </recommendedName>
    <alternativeName>
        <fullName evidence="1">3-deoxy-D-manno-octulosonic acid 8-phosphate synthase</fullName>
    </alternativeName>
    <alternativeName>
        <fullName evidence="1">KDO-8-phosphate synthase</fullName>
        <shortName evidence="1">KDO 8-P synthase</shortName>
        <shortName evidence="1">KDOPS</shortName>
    </alternativeName>
    <alternativeName>
        <fullName evidence="1">Phospho-2-dehydro-3-deoxyoctonate aldolase</fullName>
    </alternativeName>
</protein>
<proteinExistence type="inferred from homology"/>
<gene>
    <name evidence="1" type="primary">kdsA</name>
    <name type="ordered locus">PputW619_1422</name>
</gene>
<dbReference type="EC" id="2.5.1.55" evidence="1"/>
<dbReference type="EMBL" id="CP000949">
    <property type="protein sequence ID" value="ACA71927.1"/>
    <property type="molecule type" value="Genomic_DNA"/>
</dbReference>
<dbReference type="SMR" id="B1J5Q5"/>
<dbReference type="STRING" id="390235.PputW619_1422"/>
<dbReference type="KEGG" id="ppw:PputW619_1422"/>
<dbReference type="eggNOG" id="COG2877">
    <property type="taxonomic scope" value="Bacteria"/>
</dbReference>
<dbReference type="HOGENOM" id="CLU_036666_0_0_6"/>
<dbReference type="OrthoDB" id="9776934at2"/>
<dbReference type="UniPathway" id="UPA00030"/>
<dbReference type="UniPathway" id="UPA00357">
    <property type="reaction ID" value="UER00474"/>
</dbReference>
<dbReference type="GO" id="GO:0005737">
    <property type="term" value="C:cytoplasm"/>
    <property type="evidence" value="ECO:0007669"/>
    <property type="project" value="UniProtKB-SubCell"/>
</dbReference>
<dbReference type="GO" id="GO:0008676">
    <property type="term" value="F:3-deoxy-8-phosphooctulonate synthase activity"/>
    <property type="evidence" value="ECO:0007669"/>
    <property type="project" value="UniProtKB-UniRule"/>
</dbReference>
<dbReference type="GO" id="GO:0019294">
    <property type="term" value="P:keto-3-deoxy-D-manno-octulosonic acid biosynthetic process"/>
    <property type="evidence" value="ECO:0007669"/>
    <property type="project" value="UniProtKB-UniRule"/>
</dbReference>
<dbReference type="Gene3D" id="3.20.20.70">
    <property type="entry name" value="Aldolase class I"/>
    <property type="match status" value="1"/>
</dbReference>
<dbReference type="HAMAP" id="MF_00056">
    <property type="entry name" value="KDO8P_synth"/>
    <property type="match status" value="1"/>
</dbReference>
<dbReference type="InterPro" id="IPR013785">
    <property type="entry name" value="Aldolase_TIM"/>
</dbReference>
<dbReference type="InterPro" id="IPR006218">
    <property type="entry name" value="DAHP1/KDSA"/>
</dbReference>
<dbReference type="InterPro" id="IPR006269">
    <property type="entry name" value="KDO8P_synthase"/>
</dbReference>
<dbReference type="NCBIfam" id="TIGR01362">
    <property type="entry name" value="KDO8P_synth"/>
    <property type="match status" value="1"/>
</dbReference>
<dbReference type="NCBIfam" id="NF003543">
    <property type="entry name" value="PRK05198.1"/>
    <property type="match status" value="1"/>
</dbReference>
<dbReference type="NCBIfam" id="NF009109">
    <property type="entry name" value="PRK12457.1"/>
    <property type="match status" value="1"/>
</dbReference>
<dbReference type="PANTHER" id="PTHR21057">
    <property type="entry name" value="PHOSPHO-2-DEHYDRO-3-DEOXYHEPTONATE ALDOLASE"/>
    <property type="match status" value="1"/>
</dbReference>
<dbReference type="Pfam" id="PF00793">
    <property type="entry name" value="DAHP_synth_1"/>
    <property type="match status" value="1"/>
</dbReference>
<dbReference type="SUPFAM" id="SSF51569">
    <property type="entry name" value="Aldolase"/>
    <property type="match status" value="1"/>
</dbReference>
<reference key="1">
    <citation type="submission" date="2008-02" db="EMBL/GenBank/DDBJ databases">
        <title>Complete sequence of Pseudomonas putida W619.</title>
        <authorList>
            <person name="Copeland A."/>
            <person name="Lucas S."/>
            <person name="Lapidus A."/>
            <person name="Barry K."/>
            <person name="Detter J.C."/>
            <person name="Glavina del Rio T."/>
            <person name="Dalin E."/>
            <person name="Tice H."/>
            <person name="Pitluck S."/>
            <person name="Chain P."/>
            <person name="Malfatti S."/>
            <person name="Shin M."/>
            <person name="Vergez L."/>
            <person name="Schmutz J."/>
            <person name="Larimer F."/>
            <person name="Land M."/>
            <person name="Hauser L."/>
            <person name="Kyrpides N."/>
            <person name="Kim E."/>
            <person name="Taghavi S."/>
            <person name="Vangronsveld D."/>
            <person name="van der Lelie D."/>
            <person name="Richardson P."/>
        </authorList>
    </citation>
    <scope>NUCLEOTIDE SEQUENCE [LARGE SCALE GENOMIC DNA]</scope>
    <source>
        <strain>W619</strain>
    </source>
</reference>
<sequence length="280" mass="30400">MIKITQNIECSNAAPFVLFGGINVLESEDLALTACAEYVRVTEKLGIPYVFKASFDKANRSSIHSYRGPGMEEGLRIFEKVKAEFGVPIITDVHEIYQCAPVAEVVDVLQLPAFLARQTDLVVALAKTGKPVNIKKPQFLSPSQMQNIVQKFKEAGNDQLILCDRGTCMGYDNLVVDMLGFGVMKRTCDDLPIIFDVTHALQNRDPSGAASGGRREQVVDLARAGMGVGLAGLFLEAHPNPDQAKCDGPSALPLDKLEPFLAQIKALDDLVKSFPPLVIG</sequence>
<organism>
    <name type="scientific">Pseudomonas putida (strain W619)</name>
    <dbReference type="NCBI Taxonomy" id="390235"/>
    <lineage>
        <taxon>Bacteria</taxon>
        <taxon>Pseudomonadati</taxon>
        <taxon>Pseudomonadota</taxon>
        <taxon>Gammaproteobacteria</taxon>
        <taxon>Pseudomonadales</taxon>
        <taxon>Pseudomonadaceae</taxon>
        <taxon>Pseudomonas</taxon>
    </lineage>
</organism>
<comment type="catalytic activity">
    <reaction evidence="1">
        <text>D-arabinose 5-phosphate + phosphoenolpyruvate + H2O = 3-deoxy-alpha-D-manno-2-octulosonate-8-phosphate + phosphate</text>
        <dbReference type="Rhea" id="RHEA:14053"/>
        <dbReference type="ChEBI" id="CHEBI:15377"/>
        <dbReference type="ChEBI" id="CHEBI:43474"/>
        <dbReference type="ChEBI" id="CHEBI:57693"/>
        <dbReference type="ChEBI" id="CHEBI:58702"/>
        <dbReference type="ChEBI" id="CHEBI:85985"/>
        <dbReference type="EC" id="2.5.1.55"/>
    </reaction>
</comment>
<comment type="pathway">
    <text evidence="1">Carbohydrate biosynthesis; 3-deoxy-D-manno-octulosonate biosynthesis; 3-deoxy-D-manno-octulosonate from D-ribulose 5-phosphate: step 2/3.</text>
</comment>
<comment type="pathway">
    <text evidence="1">Bacterial outer membrane biogenesis; lipopolysaccharide biosynthesis.</text>
</comment>
<comment type="subcellular location">
    <subcellularLocation>
        <location evidence="1">Cytoplasm</location>
    </subcellularLocation>
</comment>
<comment type="similarity">
    <text evidence="1">Belongs to the KdsA family.</text>
</comment>